<protein>
    <recommendedName>
        <fullName>Cytochrome b</fullName>
    </recommendedName>
    <alternativeName>
        <fullName>Complex III subunit 3</fullName>
    </alternativeName>
    <alternativeName>
        <fullName>Complex III subunit III</fullName>
    </alternativeName>
    <alternativeName>
        <fullName>Cytochrome b-c1 complex subunit 3</fullName>
    </alternativeName>
    <alternativeName>
        <fullName>Ubiquinol-cytochrome-c reductase complex cytochrome b subunit</fullName>
    </alternativeName>
</protein>
<proteinExistence type="inferred from homology"/>
<name>CYB_MARFO</name>
<gene>
    <name type="primary">MT-CYB</name>
    <name type="synonym">COB</name>
    <name type="synonym">CYTB</name>
    <name type="synonym">MTCYB</name>
</gene>
<evidence type="ECO:0000250" key="1"/>
<evidence type="ECO:0000250" key="2">
    <source>
        <dbReference type="UniProtKB" id="P00157"/>
    </source>
</evidence>
<evidence type="ECO:0000255" key="3">
    <source>
        <dbReference type="PROSITE-ProRule" id="PRU00967"/>
    </source>
</evidence>
<evidence type="ECO:0000255" key="4">
    <source>
        <dbReference type="PROSITE-ProRule" id="PRU00968"/>
    </source>
</evidence>
<geneLocation type="mitochondrion"/>
<sequence length="379" mass="42479">MTNIRKTHPLAKIINNSFIDLPAPSNISAWWNFGSLLGICLILQILTGLFLAMHYTSDTTTAFSSVTHICRDVNYGWIIRYMHANGASMFFICLFLHVGRGLYYGSYMFPETWNIGIILLFAVMATAFMGYVLPWGQMSFWGATVITNLLSAIPYIGTSLVEWIWGGFSVDKATLTRFFAFHFILPFIISALAAVHLLFLHETGSNNPSGIPSDSDKIPFHPYYTIKDILGALLLILALMMLVLFSPDLLGDPDNYTPANPLNTPPHIKPEWYFLFAYAILRSIPNKLGGVLALVLSILVLAIIPLLHTSKQRGMMFRPLSQCLFWLLVADLLTLTWIGGQPVEHPFITIGQLASILYFAILLIFMPAISIIENNLLKW</sequence>
<dbReference type="EMBL" id="AF448246">
    <property type="protein sequence ID" value="AAL60228.1"/>
    <property type="molecule type" value="Genomic_DNA"/>
</dbReference>
<dbReference type="EMBL" id="AF448245">
    <property type="protein sequence ID" value="AAL60227.1"/>
    <property type="molecule type" value="Genomic_DNA"/>
</dbReference>
<dbReference type="SMR" id="Q8W8Q1"/>
<dbReference type="GO" id="GO:0005743">
    <property type="term" value="C:mitochondrial inner membrane"/>
    <property type="evidence" value="ECO:0007669"/>
    <property type="project" value="UniProtKB-SubCell"/>
</dbReference>
<dbReference type="GO" id="GO:0045275">
    <property type="term" value="C:respiratory chain complex III"/>
    <property type="evidence" value="ECO:0007669"/>
    <property type="project" value="InterPro"/>
</dbReference>
<dbReference type="GO" id="GO:0046872">
    <property type="term" value="F:metal ion binding"/>
    <property type="evidence" value="ECO:0007669"/>
    <property type="project" value="UniProtKB-KW"/>
</dbReference>
<dbReference type="GO" id="GO:0008121">
    <property type="term" value="F:ubiquinol-cytochrome-c reductase activity"/>
    <property type="evidence" value="ECO:0007669"/>
    <property type="project" value="InterPro"/>
</dbReference>
<dbReference type="GO" id="GO:0006122">
    <property type="term" value="P:mitochondrial electron transport, ubiquinol to cytochrome c"/>
    <property type="evidence" value="ECO:0007669"/>
    <property type="project" value="TreeGrafter"/>
</dbReference>
<dbReference type="CDD" id="cd00290">
    <property type="entry name" value="cytochrome_b_C"/>
    <property type="match status" value="1"/>
</dbReference>
<dbReference type="CDD" id="cd00284">
    <property type="entry name" value="Cytochrome_b_N"/>
    <property type="match status" value="1"/>
</dbReference>
<dbReference type="FunFam" id="1.20.810.10:FF:000002">
    <property type="entry name" value="Cytochrome b"/>
    <property type="match status" value="1"/>
</dbReference>
<dbReference type="Gene3D" id="1.20.810.10">
    <property type="entry name" value="Cytochrome Bc1 Complex, Chain C"/>
    <property type="match status" value="1"/>
</dbReference>
<dbReference type="InterPro" id="IPR005798">
    <property type="entry name" value="Cyt_b/b6_C"/>
</dbReference>
<dbReference type="InterPro" id="IPR036150">
    <property type="entry name" value="Cyt_b/b6_C_sf"/>
</dbReference>
<dbReference type="InterPro" id="IPR005797">
    <property type="entry name" value="Cyt_b/b6_N"/>
</dbReference>
<dbReference type="InterPro" id="IPR027387">
    <property type="entry name" value="Cytb/b6-like_sf"/>
</dbReference>
<dbReference type="InterPro" id="IPR030689">
    <property type="entry name" value="Cytochrome_b"/>
</dbReference>
<dbReference type="InterPro" id="IPR048260">
    <property type="entry name" value="Cytochrome_b_C_euk/bac"/>
</dbReference>
<dbReference type="InterPro" id="IPR048259">
    <property type="entry name" value="Cytochrome_b_N_euk/bac"/>
</dbReference>
<dbReference type="InterPro" id="IPR016174">
    <property type="entry name" value="Di-haem_cyt_TM"/>
</dbReference>
<dbReference type="PANTHER" id="PTHR19271">
    <property type="entry name" value="CYTOCHROME B"/>
    <property type="match status" value="1"/>
</dbReference>
<dbReference type="PANTHER" id="PTHR19271:SF16">
    <property type="entry name" value="CYTOCHROME B"/>
    <property type="match status" value="1"/>
</dbReference>
<dbReference type="Pfam" id="PF00032">
    <property type="entry name" value="Cytochrom_B_C"/>
    <property type="match status" value="1"/>
</dbReference>
<dbReference type="Pfam" id="PF00033">
    <property type="entry name" value="Cytochrome_B"/>
    <property type="match status" value="1"/>
</dbReference>
<dbReference type="PIRSF" id="PIRSF038885">
    <property type="entry name" value="COB"/>
    <property type="match status" value="1"/>
</dbReference>
<dbReference type="SUPFAM" id="SSF81648">
    <property type="entry name" value="a domain/subunit of cytochrome bc1 complex (Ubiquinol-cytochrome c reductase)"/>
    <property type="match status" value="1"/>
</dbReference>
<dbReference type="SUPFAM" id="SSF81342">
    <property type="entry name" value="Transmembrane di-heme cytochromes"/>
    <property type="match status" value="1"/>
</dbReference>
<dbReference type="PROSITE" id="PS51003">
    <property type="entry name" value="CYTB_CTER"/>
    <property type="match status" value="1"/>
</dbReference>
<dbReference type="PROSITE" id="PS51002">
    <property type="entry name" value="CYTB_NTER"/>
    <property type="match status" value="1"/>
</dbReference>
<keyword id="KW-0249">Electron transport</keyword>
<keyword id="KW-0349">Heme</keyword>
<keyword id="KW-0408">Iron</keyword>
<keyword id="KW-0472">Membrane</keyword>
<keyword id="KW-0479">Metal-binding</keyword>
<keyword id="KW-0496">Mitochondrion</keyword>
<keyword id="KW-0999">Mitochondrion inner membrane</keyword>
<keyword id="KW-0679">Respiratory chain</keyword>
<keyword id="KW-0812">Transmembrane</keyword>
<keyword id="KW-1133">Transmembrane helix</keyword>
<keyword id="KW-0813">Transport</keyword>
<keyword id="KW-0830">Ubiquinone</keyword>
<accession>Q8W8Q1</accession>
<reference key="1">
    <citation type="journal article" date="2002" name="Mol. Phylogenet. Evol.">
        <title>Molecular evolution of holarctic Martens (genus Martes, Mammalia: Carnivora: Mustelidae).</title>
        <authorList>
            <person name="Stone K.D."/>
            <person name="Cook J.A."/>
        </authorList>
    </citation>
    <scope>NUCLEOTIDE SEQUENCE [GENOMIC DNA]</scope>
</reference>
<feature type="chain" id="PRO_0000254817" description="Cytochrome b">
    <location>
        <begin position="1"/>
        <end position="379"/>
    </location>
</feature>
<feature type="transmembrane region" description="Helical" evidence="2">
    <location>
        <begin position="33"/>
        <end position="53"/>
    </location>
</feature>
<feature type="transmembrane region" description="Helical" evidence="2">
    <location>
        <begin position="77"/>
        <end position="98"/>
    </location>
</feature>
<feature type="transmembrane region" description="Helical" evidence="2">
    <location>
        <begin position="113"/>
        <end position="133"/>
    </location>
</feature>
<feature type="transmembrane region" description="Helical" evidence="2">
    <location>
        <begin position="178"/>
        <end position="198"/>
    </location>
</feature>
<feature type="transmembrane region" description="Helical" evidence="2">
    <location>
        <begin position="226"/>
        <end position="246"/>
    </location>
</feature>
<feature type="transmembrane region" description="Helical" evidence="2">
    <location>
        <begin position="288"/>
        <end position="308"/>
    </location>
</feature>
<feature type="transmembrane region" description="Helical" evidence="2">
    <location>
        <begin position="320"/>
        <end position="340"/>
    </location>
</feature>
<feature type="transmembrane region" description="Helical" evidence="2">
    <location>
        <begin position="347"/>
        <end position="367"/>
    </location>
</feature>
<feature type="binding site" description="axial binding residue" evidence="2">
    <location>
        <position position="83"/>
    </location>
    <ligand>
        <name>heme b</name>
        <dbReference type="ChEBI" id="CHEBI:60344"/>
        <label>b562</label>
    </ligand>
    <ligandPart>
        <name>Fe</name>
        <dbReference type="ChEBI" id="CHEBI:18248"/>
    </ligandPart>
</feature>
<feature type="binding site" description="axial binding residue" evidence="2">
    <location>
        <position position="97"/>
    </location>
    <ligand>
        <name>heme b</name>
        <dbReference type="ChEBI" id="CHEBI:60344"/>
        <label>b566</label>
    </ligand>
    <ligandPart>
        <name>Fe</name>
        <dbReference type="ChEBI" id="CHEBI:18248"/>
    </ligandPart>
</feature>
<feature type="binding site" description="axial binding residue" evidence="2">
    <location>
        <position position="182"/>
    </location>
    <ligand>
        <name>heme b</name>
        <dbReference type="ChEBI" id="CHEBI:60344"/>
        <label>b562</label>
    </ligand>
    <ligandPart>
        <name>Fe</name>
        <dbReference type="ChEBI" id="CHEBI:18248"/>
    </ligandPart>
</feature>
<feature type="binding site" description="axial binding residue" evidence="2">
    <location>
        <position position="196"/>
    </location>
    <ligand>
        <name>heme b</name>
        <dbReference type="ChEBI" id="CHEBI:60344"/>
        <label>b566</label>
    </ligand>
    <ligandPart>
        <name>Fe</name>
        <dbReference type="ChEBI" id="CHEBI:18248"/>
    </ligandPart>
</feature>
<feature type="binding site" evidence="2">
    <location>
        <position position="201"/>
    </location>
    <ligand>
        <name>a ubiquinone</name>
        <dbReference type="ChEBI" id="CHEBI:16389"/>
    </ligand>
</feature>
<comment type="function">
    <text evidence="2">Component of the ubiquinol-cytochrome c reductase complex (complex III or cytochrome b-c1 complex) that is part of the mitochondrial respiratory chain. The b-c1 complex mediates electron transfer from ubiquinol to cytochrome c. Contributes to the generation of a proton gradient across the mitochondrial membrane that is then used for ATP synthesis.</text>
</comment>
<comment type="cofactor">
    <cofactor evidence="2">
        <name>heme b</name>
        <dbReference type="ChEBI" id="CHEBI:60344"/>
    </cofactor>
    <text evidence="2">Binds 2 heme b groups non-covalently.</text>
</comment>
<comment type="subunit">
    <text evidence="2">The cytochrome bc1 complex contains 11 subunits: 3 respiratory subunits (MT-CYB, CYC1 and UQCRFS1), 2 core proteins (UQCRC1 and UQCRC2) and 6 low-molecular weight proteins (UQCRH/QCR6, UQCRB/QCR7, UQCRQ/QCR8, UQCR10/QCR9, UQCR11/QCR10 and a cleavage product of UQCRFS1). This cytochrome bc1 complex then forms a dimer.</text>
</comment>
<comment type="subcellular location">
    <subcellularLocation>
        <location evidence="2">Mitochondrion inner membrane</location>
        <topology evidence="2">Multi-pass membrane protein</topology>
    </subcellularLocation>
</comment>
<comment type="miscellaneous">
    <text evidence="1">Heme 1 (or BL or b562) is low-potential and absorbs at about 562 nm, and heme 2 (or BH or b566) is high-potential and absorbs at about 566 nm.</text>
</comment>
<comment type="similarity">
    <text evidence="3 4">Belongs to the cytochrome b family.</text>
</comment>
<comment type="caution">
    <text evidence="2">The full-length protein contains only eight transmembrane helices, not nine as predicted by bioinformatics tools.</text>
</comment>
<organism>
    <name type="scientific">Martes foina</name>
    <name type="common">Beech marten</name>
    <dbReference type="NCBI Taxonomy" id="9659"/>
    <lineage>
        <taxon>Eukaryota</taxon>
        <taxon>Metazoa</taxon>
        <taxon>Chordata</taxon>
        <taxon>Craniata</taxon>
        <taxon>Vertebrata</taxon>
        <taxon>Euteleostomi</taxon>
        <taxon>Mammalia</taxon>
        <taxon>Eutheria</taxon>
        <taxon>Laurasiatheria</taxon>
        <taxon>Carnivora</taxon>
        <taxon>Caniformia</taxon>
        <taxon>Musteloidea</taxon>
        <taxon>Mustelidae</taxon>
        <taxon>Guloninae</taxon>
        <taxon>Martes</taxon>
    </lineage>
</organism>